<evidence type="ECO:0000255" key="1">
    <source>
        <dbReference type="PROSITE-ProRule" id="PRU00457"/>
    </source>
</evidence>
<evidence type="ECO:0000305" key="2"/>
<keyword id="KW-0229">DNA integration</keyword>
<keyword id="KW-0233">DNA recombination</keyword>
<keyword id="KW-0255">Endonuclease</keyword>
<keyword id="KW-0378">Hydrolase</keyword>
<keyword id="KW-0540">Nuclease</keyword>
<keyword id="KW-1185">Reference proteome</keyword>
<name>INTG_SPV1R</name>
<proteinExistence type="inferred from homology"/>
<feature type="chain" id="PRO_0000065793" description="Putative integrase ORF3">
    <location>
        <begin position="1"/>
        <end position="322"/>
    </location>
</feature>
<feature type="domain" description="Integrase catalytic" evidence="1">
    <location>
        <begin position="153"/>
        <end position="322"/>
    </location>
</feature>
<protein>
    <recommendedName>
        <fullName>Putative integrase ORF3</fullName>
    </recommendedName>
    <alternativeName>
        <fullName>Gene 3 protein</fullName>
    </alternativeName>
</protein>
<comment type="function">
    <text>This protein may encode an integrase, which is necessary for integration of the viral DNA into host genome.</text>
</comment>
<comment type="similarity">
    <text evidence="2">Belongs to the plectrovirus integrase ORF3 family.</text>
</comment>
<sequence length="322" mass="38785">MYSHLSFMDKVKLEQLLLSKIFLKKNGEQNISAIAKYLNRHRSTILREIKRFKTIDEYSAYKSDKMYYEKRKKNNKRFKFTEEQLNFIHLRFNVYHDSPSELIYRYFLKFKVKFPVCVKTLYKWIRLGFYGFLKQNLRHHGKKYKRKGKSDNRGKLTDFKSIWDIDNKVSNVGWLEMDTVVGKDHKSAILVLVEQLSKKYFAIKLENHTAREVEKKFKDIIIKNNLIGKIKGIITDRRKEFSKWREMEIFAETQVYFCDAGSPQQKPLIEYMNSELRHWFPKGTDFNKVSQKQIDWVVNVINDKLRPCLNWISSKEMFLQNI</sequence>
<accession>P15894</accession>
<organism>
    <name type="scientific">Spiroplasma virus SpV1-R8A2 B</name>
    <name type="common">SpV1</name>
    <name type="synonym">Spiroplasma virus 1</name>
    <dbReference type="NCBI Taxonomy" id="10854"/>
    <lineage>
        <taxon>Viruses</taxon>
        <taxon>Monodnaviria</taxon>
        <taxon>Loebvirae</taxon>
        <taxon>Hofneiviricota</taxon>
        <taxon>Faserviricetes</taxon>
        <taxon>Tubulavirales</taxon>
        <taxon>Plectroviridae</taxon>
        <taxon>Vespertiliovirus</taxon>
        <taxon>Vespertiliovirus R8A2B</taxon>
    </lineage>
</organism>
<gene>
    <name type="ORF">ORF3</name>
</gene>
<organismHost>
    <name type="scientific">Spiroplasma citri</name>
    <dbReference type="NCBI Taxonomy" id="2133"/>
</organismHost>
<dbReference type="EMBL" id="X51344">
    <property type="protein sequence ID" value="CAA35729.1"/>
    <property type="molecule type" value="Genomic_DNA"/>
</dbReference>
<dbReference type="RefSeq" id="NP_040341.1">
    <property type="nucleotide sequence ID" value="NC_001365.1"/>
</dbReference>
<dbReference type="KEGG" id="vg:1260860"/>
<dbReference type="OrthoDB" id="26441at10239"/>
<dbReference type="Proteomes" id="UP000001252">
    <property type="component" value="Segment"/>
</dbReference>
<dbReference type="GO" id="GO:0004519">
    <property type="term" value="F:endonuclease activity"/>
    <property type="evidence" value="ECO:0007669"/>
    <property type="project" value="UniProtKB-KW"/>
</dbReference>
<dbReference type="GO" id="GO:0003676">
    <property type="term" value="F:nucleic acid binding"/>
    <property type="evidence" value="ECO:0007669"/>
    <property type="project" value="InterPro"/>
</dbReference>
<dbReference type="GO" id="GO:0004803">
    <property type="term" value="F:transposase activity"/>
    <property type="evidence" value="ECO:0007669"/>
    <property type="project" value="TreeGrafter"/>
</dbReference>
<dbReference type="GO" id="GO:0015074">
    <property type="term" value="P:DNA integration"/>
    <property type="evidence" value="ECO:0007669"/>
    <property type="project" value="UniProtKB-KW"/>
</dbReference>
<dbReference type="GO" id="GO:0006310">
    <property type="term" value="P:DNA recombination"/>
    <property type="evidence" value="ECO:0007669"/>
    <property type="project" value="UniProtKB-KW"/>
</dbReference>
<dbReference type="GO" id="GO:0032196">
    <property type="term" value="P:transposition"/>
    <property type="evidence" value="ECO:0007669"/>
    <property type="project" value="TreeGrafter"/>
</dbReference>
<dbReference type="Gene3D" id="3.30.420.10">
    <property type="entry name" value="Ribonuclease H-like superfamily/Ribonuclease H"/>
    <property type="match status" value="1"/>
</dbReference>
<dbReference type="InterPro" id="IPR001584">
    <property type="entry name" value="Integrase_cat-core"/>
</dbReference>
<dbReference type="InterPro" id="IPR025246">
    <property type="entry name" value="IS30-like_HTH"/>
</dbReference>
<dbReference type="InterPro" id="IPR012337">
    <property type="entry name" value="RNaseH-like_sf"/>
</dbReference>
<dbReference type="InterPro" id="IPR036397">
    <property type="entry name" value="RNaseH_sf"/>
</dbReference>
<dbReference type="InterPro" id="IPR051917">
    <property type="entry name" value="Transposase-Integrase"/>
</dbReference>
<dbReference type="InterPro" id="IPR053392">
    <property type="entry name" value="Transposase_IS30-like"/>
</dbReference>
<dbReference type="NCBIfam" id="NF033563">
    <property type="entry name" value="transpos_IS30"/>
    <property type="match status" value="1"/>
</dbReference>
<dbReference type="PANTHER" id="PTHR10948">
    <property type="entry name" value="TRANSPOSASE"/>
    <property type="match status" value="1"/>
</dbReference>
<dbReference type="PANTHER" id="PTHR10948:SF23">
    <property type="entry name" value="TRANSPOSASE INSI FOR INSERTION SEQUENCE ELEMENT IS30A-RELATED"/>
    <property type="match status" value="1"/>
</dbReference>
<dbReference type="Pfam" id="PF13936">
    <property type="entry name" value="HTH_38"/>
    <property type="match status" value="1"/>
</dbReference>
<dbReference type="Pfam" id="PF00665">
    <property type="entry name" value="rve"/>
    <property type="match status" value="1"/>
</dbReference>
<dbReference type="SUPFAM" id="SSF53098">
    <property type="entry name" value="Ribonuclease H-like"/>
    <property type="match status" value="1"/>
</dbReference>
<dbReference type="PROSITE" id="PS50994">
    <property type="entry name" value="INTEGRASE"/>
    <property type="match status" value="1"/>
</dbReference>
<reference key="1">
    <citation type="journal article" date="1990" name="Nucleic Acids Res.">
        <title>Complete nucleotide sequence of the genome of Spiroplasma citri virus SpV1-R8A2 B.</title>
        <authorList>
            <person name="Renaudin J."/>
            <person name="Aullo P."/>
            <person name="Vignault J.C."/>
            <person name="Bove J.M."/>
        </authorList>
    </citation>
    <scope>NUCLEOTIDE SEQUENCE [GENOMIC DNA]</scope>
</reference>